<accession>P08556</accession>
<keyword id="KW-0007">Acetylation</keyword>
<keyword id="KW-1003">Cell membrane</keyword>
<keyword id="KW-0333">Golgi apparatus</keyword>
<keyword id="KW-0342">GTP-binding</keyword>
<keyword id="KW-0378">Hydrolase</keyword>
<keyword id="KW-1017">Isopeptide bond</keyword>
<keyword id="KW-0449">Lipoprotein</keyword>
<keyword id="KW-0472">Membrane</keyword>
<keyword id="KW-0488">Methylation</keyword>
<keyword id="KW-0547">Nucleotide-binding</keyword>
<keyword id="KW-0564">Palmitate</keyword>
<keyword id="KW-0597">Phosphoprotein</keyword>
<keyword id="KW-0636">Prenylation</keyword>
<keyword id="KW-0656">Proto-oncogene</keyword>
<keyword id="KW-1185">Reference proteome</keyword>
<keyword id="KW-0832">Ubl conjugation</keyword>
<organism>
    <name type="scientific">Mus musculus</name>
    <name type="common">Mouse</name>
    <dbReference type="NCBI Taxonomy" id="10090"/>
    <lineage>
        <taxon>Eukaryota</taxon>
        <taxon>Metazoa</taxon>
        <taxon>Chordata</taxon>
        <taxon>Craniata</taxon>
        <taxon>Vertebrata</taxon>
        <taxon>Euteleostomi</taxon>
        <taxon>Mammalia</taxon>
        <taxon>Eutheria</taxon>
        <taxon>Euarchontoglires</taxon>
        <taxon>Glires</taxon>
        <taxon>Rodentia</taxon>
        <taxon>Myomorpha</taxon>
        <taxon>Muroidea</taxon>
        <taxon>Muridae</taxon>
        <taxon>Murinae</taxon>
        <taxon>Mus</taxon>
        <taxon>Mus</taxon>
    </lineage>
</organism>
<gene>
    <name type="primary">Nras</name>
</gene>
<proteinExistence type="evidence at protein level"/>
<name>RASN_MOUSE</name>
<evidence type="ECO:0000250" key="1"/>
<evidence type="ECO:0000250" key="2">
    <source>
        <dbReference type="UniProtKB" id="P01111"/>
    </source>
</evidence>
<evidence type="ECO:0000250" key="3">
    <source>
        <dbReference type="UniProtKB" id="P01112"/>
    </source>
</evidence>
<evidence type="ECO:0000250" key="4">
    <source>
        <dbReference type="UniProtKB" id="P01116"/>
    </source>
</evidence>
<evidence type="ECO:0000250" key="5">
    <source>
        <dbReference type="UniProtKB" id="Q04970"/>
    </source>
</evidence>
<evidence type="ECO:0000255" key="6"/>
<evidence type="ECO:0000305" key="7"/>
<reference key="1">
    <citation type="journal article" date="1985" name="Proc. Natl. Acad. Sci. U.S.A.">
        <title>Loss of the normal N-ras allele in a mouse thymic lymphoma induced by a chemical carcinogen.</title>
        <authorList>
            <person name="Guerrero I."/>
            <person name="Villasante A."/>
            <person name="Corces V."/>
            <person name="Pellicer A."/>
        </authorList>
    </citation>
    <scope>NUCLEOTIDE SEQUENCE [GENOMIC DNA]</scope>
</reference>
<reference key="2">
    <citation type="journal article" date="1987" name="Oncogene Res.">
        <title>Mouse N-ras genes: organization of the functional locus and of a truncated cDNA-like pseudogene.</title>
        <authorList>
            <person name="Chang H.Y."/>
            <person name="Guerrero I."/>
            <person name="Lake R."/>
            <person name="Pellicer A."/>
            <person name="D'Eustachio P."/>
        </authorList>
    </citation>
    <scope>NUCLEOTIDE SEQUENCE [GENOMIC DNA / MRNA]</scope>
</reference>
<reference key="3">
    <citation type="journal article" date="2010" name="Cell">
        <title>A tissue-specific atlas of mouse protein phosphorylation and expression.</title>
        <authorList>
            <person name="Huttlin E.L."/>
            <person name="Jedrychowski M.P."/>
            <person name="Elias J.E."/>
            <person name="Goswami T."/>
            <person name="Rad R."/>
            <person name="Beausoleil S.A."/>
            <person name="Villen J."/>
            <person name="Haas W."/>
            <person name="Sowa M.E."/>
            <person name="Gygi S.P."/>
        </authorList>
    </citation>
    <scope>IDENTIFICATION BY MASS SPECTROMETRY [LARGE SCALE ANALYSIS]</scope>
    <source>
        <tissue>Brain</tissue>
        <tissue>Kidney</tissue>
        <tissue>Lung</tissue>
        <tissue>Spleen</tissue>
        <tissue>Testis</tissue>
    </source>
</reference>
<sequence>MTEYKLVVVGAGGVGKSALTIQLIQNHFVDEYDPTIEDSYRKQVVIDGETCLLDILDTAGQEEYSAMRDQYMRTGEGFLCVFAINNSKSFADINLYREQIKRVKDSDDVPMVLVGNKCDLPTRTVDTKQAHELAKSYGIPFIETSAKTRQGVEDAFYTLVREIRQYRLKKLNSSDDGTQGCMGSPCVLM</sequence>
<comment type="function">
    <text evidence="2">Ras proteins bind GDP/GTP and possess intrinsic GTPase activity.</text>
</comment>
<comment type="catalytic activity">
    <reaction evidence="4">
        <text>GTP + H2O = GDP + phosphate + H(+)</text>
        <dbReference type="Rhea" id="RHEA:19669"/>
        <dbReference type="ChEBI" id="CHEBI:15377"/>
        <dbReference type="ChEBI" id="CHEBI:15378"/>
        <dbReference type="ChEBI" id="CHEBI:37565"/>
        <dbReference type="ChEBI" id="CHEBI:43474"/>
        <dbReference type="ChEBI" id="CHEBI:58189"/>
        <dbReference type="EC" id="3.6.5.2"/>
    </reaction>
</comment>
<comment type="activity regulation">
    <text>Alternates between an inactive form bound to GDP and an active form bound to GTP. Activated by a guanine nucleotide-exchange factor (GEF) and inactivated by a GTPase-activating protein (GAP).</text>
</comment>
<comment type="subunit">
    <text evidence="2 5">Interacts (active GTP-bound form preferentially) with RGS14 (By similarity). Interacts (active GTP-bound form) with RASSF7 (By similarity). Interacts (active GTP-bound form) with both SHOC2 and PP1c (all isoforms) to form a tertiary complex; SHOC2 and PP1c preferably bind M-Ras/MRAS, but they also bind K-Ras/KRAS, N-Ras/NRAS and H-Ras/HRAS (By similarity).</text>
</comment>
<comment type="subcellular location">
    <subcellularLocation>
        <location evidence="2">Cell membrane</location>
        <topology evidence="2">Lipid-anchor</topology>
        <orientation evidence="2">Cytoplasmic side</orientation>
    </subcellularLocation>
    <subcellularLocation>
        <location evidence="2">Golgi apparatus membrane</location>
        <topology evidence="2">Lipid-anchor</topology>
    </subcellularLocation>
    <text evidence="2">Shuttles between the plasma membrane and the Golgi apparatus.</text>
</comment>
<comment type="PTM">
    <text evidence="2">Palmitoylated by the ZDHHC9-GOLGA7 complex. Depalmitoylated by ABHD17A, ABHD17B and ABHD17C. A continuous cycle of de- and re-palmitoylation regulates rapid exchange between plasma membrane and Golgi.</text>
</comment>
<comment type="PTM">
    <text evidence="4">Acetylation at Lys-104 prevents interaction with guanine nucleotide exchange factors (GEFs).</text>
</comment>
<comment type="PTM">
    <text evidence="3">Ubiquitinated by the BCR(LZTR1) E3 ubiquitin ligase complex at Lys-170 in a non-degradative manner, leading to inhibit Ras signaling by decreasing Ras association with membranes.</text>
</comment>
<comment type="PTM">
    <text evidence="2">Phosphorylation at Ser-89 enhances NRAS association with its downstream effectors.</text>
</comment>
<comment type="similarity">
    <text evidence="7">Belongs to the small GTPase superfamily. Ras family.</text>
</comment>
<feature type="chain" id="PRO_0000043010" description="GTPase NRas">
    <location>
        <begin position="1"/>
        <end position="186"/>
    </location>
</feature>
<feature type="propeptide" id="PRO_0000043011" description="Removed in mature form" evidence="1">
    <location>
        <begin position="187"/>
        <end position="189"/>
    </location>
</feature>
<feature type="region of interest" description="Hypervariable region">
    <location>
        <begin position="166"/>
        <end position="185"/>
    </location>
</feature>
<feature type="short sequence motif" description="Effector region">
    <location>
        <begin position="32"/>
        <end position="40"/>
    </location>
</feature>
<feature type="binding site" evidence="2">
    <location>
        <begin position="10"/>
        <end position="18"/>
    </location>
    <ligand>
        <name>GTP</name>
        <dbReference type="ChEBI" id="CHEBI:37565"/>
    </ligand>
</feature>
<feature type="binding site" evidence="2">
    <location>
        <begin position="29"/>
        <end position="30"/>
    </location>
    <ligand>
        <name>GTP</name>
        <dbReference type="ChEBI" id="CHEBI:37565"/>
    </ligand>
</feature>
<feature type="binding site" evidence="6">
    <location>
        <begin position="57"/>
        <end position="61"/>
    </location>
    <ligand>
        <name>GTP</name>
        <dbReference type="ChEBI" id="CHEBI:37565"/>
    </ligand>
</feature>
<feature type="binding site" evidence="2">
    <location>
        <begin position="116"/>
        <end position="119"/>
    </location>
    <ligand>
        <name>GTP</name>
        <dbReference type="ChEBI" id="CHEBI:37565"/>
    </ligand>
</feature>
<feature type="modified residue" description="Phosphoserine" evidence="2">
    <location>
        <position position="89"/>
    </location>
</feature>
<feature type="lipid moiety-binding region" description="S-palmitoyl cysteine" evidence="2">
    <location>
        <position position="181"/>
    </location>
</feature>
<feature type="lipid moiety-binding region" description="S-farnesyl cysteine" evidence="2">
    <location>
        <position position="186"/>
    </location>
</feature>
<feature type="cross-link" description="Glycyl lysine isopeptide (Lys-Gly) (interchain with G-Cter in ubiquitin)" evidence="2">
    <location>
        <position position="170"/>
    </location>
</feature>
<feature type="sequence conflict" description="In Ref. 2; CAA31958." evidence="7" ref="2">
    <original>M</original>
    <variation>MCKTL</variation>
    <location>
        <position position="189"/>
    </location>
</feature>
<protein>
    <recommendedName>
        <fullName>GTPase NRas</fullName>
        <ecNumber evidence="4">3.6.5.2</ecNumber>
    </recommendedName>
    <alternativeName>
        <fullName>Transforming protein N-Ras</fullName>
    </alternativeName>
</protein>
<dbReference type="EC" id="3.6.5.2" evidence="4"/>
<dbReference type="EMBL" id="M12124">
    <property type="protein sequence ID" value="AAA39839.1"/>
    <property type="molecule type" value="Genomic_DNA"/>
</dbReference>
<dbReference type="EMBL" id="M12121">
    <property type="protein sequence ID" value="AAA39839.1"/>
    <property type="status" value="JOINED"/>
    <property type="molecule type" value="Genomic_DNA"/>
</dbReference>
<dbReference type="EMBL" id="M12122">
    <property type="protein sequence ID" value="AAA39839.1"/>
    <property type="status" value="JOINED"/>
    <property type="molecule type" value="Genomic_DNA"/>
</dbReference>
<dbReference type="EMBL" id="M12123">
    <property type="protein sequence ID" value="AAA39839.1"/>
    <property type="status" value="JOINED"/>
    <property type="molecule type" value="Genomic_DNA"/>
</dbReference>
<dbReference type="EMBL" id="X13664">
    <property type="protein sequence ID" value="CAA31958.1"/>
    <property type="molecule type" value="mRNA"/>
</dbReference>
<dbReference type="EMBL" id="X06909">
    <property type="protein sequence ID" value="CAA30010.1"/>
    <property type="molecule type" value="Genomic_DNA"/>
</dbReference>
<dbReference type="PIR" id="A23560">
    <property type="entry name" value="TVMSNS"/>
</dbReference>
<dbReference type="SMR" id="P08556"/>
<dbReference type="FunCoup" id="P08556">
    <property type="interactions" value="2486"/>
</dbReference>
<dbReference type="IntAct" id="P08556">
    <property type="interactions" value="1"/>
</dbReference>
<dbReference type="STRING" id="10090.ENSMUSP00000029445"/>
<dbReference type="GlyGen" id="P08556">
    <property type="glycosylation" value="1 site, 1 O-linked glycan (1 site)"/>
</dbReference>
<dbReference type="iPTMnet" id="P08556"/>
<dbReference type="PhosphoSitePlus" id="P08556"/>
<dbReference type="SwissPalm" id="P08556"/>
<dbReference type="jPOST" id="P08556"/>
<dbReference type="PaxDb" id="10090-ENSMUSP00000029445"/>
<dbReference type="PeptideAtlas" id="P08556"/>
<dbReference type="ProteomicsDB" id="254991"/>
<dbReference type="Pumba" id="P08556"/>
<dbReference type="AGR" id="MGI:97376"/>
<dbReference type="MGI" id="MGI:97376">
    <property type="gene designation" value="Nras"/>
</dbReference>
<dbReference type="eggNOG" id="KOG0395">
    <property type="taxonomic scope" value="Eukaryota"/>
</dbReference>
<dbReference type="InParanoid" id="P08556"/>
<dbReference type="Reactome" id="R-MMU-1169092">
    <property type="pathway name" value="Activation of RAS in B cells"/>
</dbReference>
<dbReference type="Reactome" id="R-MMU-1250347">
    <property type="pathway name" value="SHC1 events in ERBB4 signaling"/>
</dbReference>
<dbReference type="Reactome" id="R-MMU-1433557">
    <property type="pathway name" value="Signaling by SCF-KIT"/>
</dbReference>
<dbReference type="Reactome" id="R-MMU-171007">
    <property type="pathway name" value="p38MAPK events"/>
</dbReference>
<dbReference type="Reactome" id="R-MMU-179812">
    <property type="pathway name" value="GRB2 events in EGFR signaling"/>
</dbReference>
<dbReference type="Reactome" id="R-MMU-180336">
    <property type="pathway name" value="SHC1 events in EGFR signaling"/>
</dbReference>
<dbReference type="Reactome" id="R-MMU-186763">
    <property type="pathway name" value="Downstream signal transduction"/>
</dbReference>
<dbReference type="Reactome" id="R-MMU-1963640">
    <property type="pathway name" value="GRB2 events in ERBB2 signaling"/>
</dbReference>
<dbReference type="Reactome" id="R-MMU-210993">
    <property type="pathway name" value="Tie2 Signaling"/>
</dbReference>
<dbReference type="Reactome" id="R-MMU-2179392">
    <property type="pathway name" value="EGFR Transactivation by Gastrin"/>
</dbReference>
<dbReference type="Reactome" id="R-MMU-2424491">
    <property type="pathway name" value="DAP12 signaling"/>
</dbReference>
<dbReference type="Reactome" id="R-MMU-2871796">
    <property type="pathway name" value="FCERI mediated MAPK activation"/>
</dbReference>
<dbReference type="Reactome" id="R-MMU-375165">
    <property type="pathway name" value="NCAM signaling for neurite out-growth"/>
</dbReference>
<dbReference type="Reactome" id="R-MMU-5218921">
    <property type="pathway name" value="VEGFR2 mediated cell proliferation"/>
</dbReference>
<dbReference type="Reactome" id="R-MMU-5621575">
    <property type="pathway name" value="CD209 (DC-SIGN) signaling"/>
</dbReference>
<dbReference type="Reactome" id="R-MMU-5654688">
    <property type="pathway name" value="SHC-mediated cascade:FGFR1"/>
</dbReference>
<dbReference type="Reactome" id="R-MMU-5654693">
    <property type="pathway name" value="FRS-mediated FGFR1 signaling"/>
</dbReference>
<dbReference type="Reactome" id="R-MMU-5654699">
    <property type="pathway name" value="SHC-mediated cascade:FGFR2"/>
</dbReference>
<dbReference type="Reactome" id="R-MMU-5654700">
    <property type="pathway name" value="FRS-mediated FGFR2 signaling"/>
</dbReference>
<dbReference type="Reactome" id="R-MMU-5654704">
    <property type="pathway name" value="SHC-mediated cascade:FGFR3"/>
</dbReference>
<dbReference type="Reactome" id="R-MMU-5654706">
    <property type="pathway name" value="FRS-mediated FGFR3 signaling"/>
</dbReference>
<dbReference type="Reactome" id="R-MMU-5654712">
    <property type="pathway name" value="FRS-mediated FGFR4 signaling"/>
</dbReference>
<dbReference type="Reactome" id="R-MMU-5654719">
    <property type="pathway name" value="SHC-mediated cascade:FGFR4"/>
</dbReference>
<dbReference type="Reactome" id="R-MMU-5658442">
    <property type="pathway name" value="Regulation of RAS by GAPs"/>
</dbReference>
<dbReference type="Reactome" id="R-MMU-5673000">
    <property type="pathway name" value="RAF activation"/>
</dbReference>
<dbReference type="Reactome" id="R-MMU-5673001">
    <property type="pathway name" value="RAF/MAP kinase cascade"/>
</dbReference>
<dbReference type="Reactome" id="R-MMU-5674135">
    <property type="pathway name" value="MAP2K and MAPK activation"/>
</dbReference>
<dbReference type="Reactome" id="R-MMU-5675221">
    <property type="pathway name" value="Negative regulation of MAPK pathway"/>
</dbReference>
<dbReference type="Reactome" id="R-MMU-6798695">
    <property type="pathway name" value="Neutrophil degranulation"/>
</dbReference>
<dbReference type="Reactome" id="R-MMU-8849471">
    <property type="pathway name" value="PTK6 Regulates RHO GTPases, RAS GTPase and MAP kinases"/>
</dbReference>
<dbReference type="Reactome" id="R-MMU-8851805">
    <property type="pathway name" value="MET activates RAS signaling"/>
</dbReference>
<dbReference type="Reactome" id="R-MMU-9607240">
    <property type="pathway name" value="FLT3 Signaling"/>
</dbReference>
<dbReference type="Reactome" id="R-MMU-9634635">
    <property type="pathway name" value="Estrogen-stimulated signaling through PRKCZ"/>
</dbReference>
<dbReference type="Reactome" id="R-MMU-9648002">
    <property type="pathway name" value="RAS processing"/>
</dbReference>
<dbReference type="ChiTaRS" id="Nras">
    <property type="organism name" value="mouse"/>
</dbReference>
<dbReference type="PRO" id="PR:P08556"/>
<dbReference type="Proteomes" id="UP000000589">
    <property type="component" value="Unplaced"/>
</dbReference>
<dbReference type="RNAct" id="P08556">
    <property type="molecule type" value="protein"/>
</dbReference>
<dbReference type="GO" id="GO:0000139">
    <property type="term" value="C:Golgi membrane"/>
    <property type="evidence" value="ECO:0007669"/>
    <property type="project" value="UniProtKB-SubCell"/>
</dbReference>
<dbReference type="GO" id="GO:0016020">
    <property type="term" value="C:membrane"/>
    <property type="evidence" value="ECO:0000314"/>
    <property type="project" value="MGI"/>
</dbReference>
<dbReference type="GO" id="GO:0005886">
    <property type="term" value="C:plasma membrane"/>
    <property type="evidence" value="ECO:0000304"/>
    <property type="project" value="Reactome"/>
</dbReference>
<dbReference type="GO" id="GO:0003925">
    <property type="term" value="F:G protein activity"/>
    <property type="evidence" value="ECO:0007669"/>
    <property type="project" value="UniProtKB-EC"/>
</dbReference>
<dbReference type="GO" id="GO:0005525">
    <property type="term" value="F:GTP binding"/>
    <property type="evidence" value="ECO:0007669"/>
    <property type="project" value="UniProtKB-KW"/>
</dbReference>
<dbReference type="GO" id="GO:0003924">
    <property type="term" value="F:GTPase activity"/>
    <property type="evidence" value="ECO:0000250"/>
    <property type="project" value="UniProtKB"/>
</dbReference>
<dbReference type="GO" id="GO:0044877">
    <property type="term" value="F:protein-containing complex binding"/>
    <property type="evidence" value="ECO:0000266"/>
    <property type="project" value="MGI"/>
</dbReference>
<dbReference type="GO" id="GO:0042832">
    <property type="term" value="P:defense response to protozoan"/>
    <property type="evidence" value="ECO:0000315"/>
    <property type="project" value="MGI"/>
</dbReference>
<dbReference type="GO" id="GO:0048642">
    <property type="term" value="P:negative regulation of skeletal muscle tissue development"/>
    <property type="evidence" value="ECO:0000314"/>
    <property type="project" value="MGI"/>
</dbReference>
<dbReference type="GO" id="GO:0045766">
    <property type="term" value="P:positive regulation of angiogenesis"/>
    <property type="evidence" value="ECO:0000315"/>
    <property type="project" value="BHF-UCL"/>
</dbReference>
<dbReference type="GO" id="GO:0048146">
    <property type="term" value="P:positive regulation of fibroblast proliferation"/>
    <property type="evidence" value="ECO:0000315"/>
    <property type="project" value="MGI"/>
</dbReference>
<dbReference type="GO" id="GO:0032729">
    <property type="term" value="P:positive regulation of type II interferon production"/>
    <property type="evidence" value="ECO:0000315"/>
    <property type="project" value="MGI"/>
</dbReference>
<dbReference type="GO" id="GO:0007265">
    <property type="term" value="P:Ras protein signal transduction"/>
    <property type="evidence" value="ECO:0000250"/>
    <property type="project" value="UniProtKB"/>
</dbReference>
<dbReference type="GO" id="GO:0051726">
    <property type="term" value="P:regulation of cell cycle"/>
    <property type="evidence" value="ECO:0000304"/>
    <property type="project" value="MGI"/>
</dbReference>
<dbReference type="GO" id="GO:0010468">
    <property type="term" value="P:regulation of gene expression"/>
    <property type="evidence" value="ECO:0000315"/>
    <property type="project" value="MGI"/>
</dbReference>
<dbReference type="GO" id="GO:0050852">
    <property type="term" value="P:T cell receptor signaling pathway"/>
    <property type="evidence" value="ECO:0000315"/>
    <property type="project" value="MGI"/>
</dbReference>
<dbReference type="CDD" id="cd04138">
    <property type="entry name" value="H_N_K_Ras_like"/>
    <property type="match status" value="1"/>
</dbReference>
<dbReference type="FunFam" id="3.40.50.300:FF:000096">
    <property type="entry name" value="KRAS proto-oncogene, GTPase"/>
    <property type="match status" value="1"/>
</dbReference>
<dbReference type="Gene3D" id="3.40.50.300">
    <property type="entry name" value="P-loop containing nucleotide triphosphate hydrolases"/>
    <property type="match status" value="1"/>
</dbReference>
<dbReference type="InterPro" id="IPR027417">
    <property type="entry name" value="P-loop_NTPase"/>
</dbReference>
<dbReference type="InterPro" id="IPR005225">
    <property type="entry name" value="Small_GTP-bd"/>
</dbReference>
<dbReference type="InterPro" id="IPR001806">
    <property type="entry name" value="Small_GTPase"/>
</dbReference>
<dbReference type="InterPro" id="IPR020849">
    <property type="entry name" value="Small_GTPase_Ras-type"/>
</dbReference>
<dbReference type="NCBIfam" id="TIGR00231">
    <property type="entry name" value="small_GTP"/>
    <property type="match status" value="1"/>
</dbReference>
<dbReference type="PANTHER" id="PTHR24070">
    <property type="entry name" value="RAS, DI-RAS, AND RHEB FAMILY MEMBERS OF SMALL GTPASE SUPERFAMILY"/>
    <property type="match status" value="1"/>
</dbReference>
<dbReference type="Pfam" id="PF00071">
    <property type="entry name" value="Ras"/>
    <property type="match status" value="1"/>
</dbReference>
<dbReference type="PRINTS" id="PR00449">
    <property type="entry name" value="RASTRNSFRMNG"/>
</dbReference>
<dbReference type="SMART" id="SM00175">
    <property type="entry name" value="RAB"/>
    <property type="match status" value="1"/>
</dbReference>
<dbReference type="SMART" id="SM00173">
    <property type="entry name" value="RAS"/>
    <property type="match status" value="1"/>
</dbReference>
<dbReference type="SMART" id="SM00174">
    <property type="entry name" value="RHO"/>
    <property type="match status" value="1"/>
</dbReference>
<dbReference type="SUPFAM" id="SSF52540">
    <property type="entry name" value="P-loop containing nucleoside triphosphate hydrolases"/>
    <property type="match status" value="1"/>
</dbReference>
<dbReference type="PROSITE" id="PS51421">
    <property type="entry name" value="RAS"/>
    <property type="match status" value="1"/>
</dbReference>